<accession>A4WPE5</accession>
<evidence type="ECO:0000255" key="1">
    <source>
        <dbReference type="HAMAP-Rule" id="MF_00361"/>
    </source>
</evidence>
<comment type="function">
    <text evidence="1">Involved in the regulation of the intracellular balance of NAD and NADP, and is a key enzyme in the biosynthesis of NADP. Catalyzes specifically the phosphorylation on 2'-hydroxyl of the adenosine moiety of NAD to yield NADP.</text>
</comment>
<comment type="catalytic activity">
    <reaction evidence="1">
        <text>NAD(+) + ATP = ADP + NADP(+) + H(+)</text>
        <dbReference type="Rhea" id="RHEA:18629"/>
        <dbReference type="ChEBI" id="CHEBI:15378"/>
        <dbReference type="ChEBI" id="CHEBI:30616"/>
        <dbReference type="ChEBI" id="CHEBI:57540"/>
        <dbReference type="ChEBI" id="CHEBI:58349"/>
        <dbReference type="ChEBI" id="CHEBI:456216"/>
        <dbReference type="EC" id="2.7.1.23"/>
    </reaction>
</comment>
<comment type="cofactor">
    <cofactor evidence="1">
        <name>a divalent metal cation</name>
        <dbReference type="ChEBI" id="CHEBI:60240"/>
    </cofactor>
</comment>
<comment type="subcellular location">
    <subcellularLocation>
        <location evidence="1">Cytoplasm</location>
    </subcellularLocation>
</comment>
<comment type="similarity">
    <text evidence="1">Belongs to the NAD kinase family.</text>
</comment>
<protein>
    <recommendedName>
        <fullName evidence="1">NAD kinase</fullName>
        <ecNumber evidence="1">2.7.1.23</ecNumber>
    </recommendedName>
    <alternativeName>
        <fullName evidence="1">ATP-dependent NAD kinase</fullName>
    </alternativeName>
</protein>
<reference key="1">
    <citation type="submission" date="2007-04" db="EMBL/GenBank/DDBJ databases">
        <title>Complete sequence of chromosome of Rhodobacter sphaeroides ATCC 17025.</title>
        <authorList>
            <consortium name="US DOE Joint Genome Institute"/>
            <person name="Copeland A."/>
            <person name="Lucas S."/>
            <person name="Lapidus A."/>
            <person name="Barry K."/>
            <person name="Detter J.C."/>
            <person name="Glavina del Rio T."/>
            <person name="Hammon N."/>
            <person name="Israni S."/>
            <person name="Dalin E."/>
            <person name="Tice H."/>
            <person name="Pitluck S."/>
            <person name="Chertkov O."/>
            <person name="Brettin T."/>
            <person name="Bruce D."/>
            <person name="Han C."/>
            <person name="Schmutz J."/>
            <person name="Larimer F."/>
            <person name="Land M."/>
            <person name="Hauser L."/>
            <person name="Kyrpides N."/>
            <person name="Kim E."/>
            <person name="Richardson P."/>
            <person name="Mackenzie C."/>
            <person name="Choudhary M."/>
            <person name="Donohue T.J."/>
            <person name="Kaplan S."/>
        </authorList>
    </citation>
    <scope>NUCLEOTIDE SEQUENCE [LARGE SCALE GENOMIC DNA]</scope>
    <source>
        <strain>ATCC 17025 / ATH 2.4.3</strain>
    </source>
</reference>
<sequence length="254" mass="27592">MTPQRIGFVASPAPVAQEALVAMEARYGQCPLPEAEVIVALGGDGFMLQTLHETQSLDIPVYGMNRGTVGFLMNGYAGDGLRERLAEAEEEILNPLVMTAVTEAGEVFHRIAINEVSLLRAGPQAAWLKISVDGKVRMEELVCDGALVCTPAGSTAYNYSAHGPILPIGADVLALTAIAPFRPRRWRGALLPKTATVRFDVIDARKRPVMADADGRSVRDVVSVEVRSEPAIRHRLLFDPGHGLEERLIREQFV</sequence>
<gene>
    <name evidence="1" type="primary">nadK</name>
    <name type="ordered locus">Rsph17025_0353</name>
</gene>
<dbReference type="EC" id="2.7.1.23" evidence="1"/>
<dbReference type="EMBL" id="CP000661">
    <property type="protein sequence ID" value="ABP69259.1"/>
    <property type="molecule type" value="Genomic_DNA"/>
</dbReference>
<dbReference type="SMR" id="A4WPE5"/>
<dbReference type="STRING" id="349102.Rsph17025_0353"/>
<dbReference type="KEGG" id="rsq:Rsph17025_0353"/>
<dbReference type="eggNOG" id="COG0061">
    <property type="taxonomic scope" value="Bacteria"/>
</dbReference>
<dbReference type="HOGENOM" id="CLU_073319_0_0_5"/>
<dbReference type="BioCyc" id="RSPH349102:G1G8M-360-MONOMER"/>
<dbReference type="GO" id="GO:0005737">
    <property type="term" value="C:cytoplasm"/>
    <property type="evidence" value="ECO:0007669"/>
    <property type="project" value="UniProtKB-SubCell"/>
</dbReference>
<dbReference type="GO" id="GO:0005524">
    <property type="term" value="F:ATP binding"/>
    <property type="evidence" value="ECO:0007669"/>
    <property type="project" value="UniProtKB-KW"/>
</dbReference>
<dbReference type="GO" id="GO:0046872">
    <property type="term" value="F:metal ion binding"/>
    <property type="evidence" value="ECO:0007669"/>
    <property type="project" value="UniProtKB-UniRule"/>
</dbReference>
<dbReference type="GO" id="GO:0051287">
    <property type="term" value="F:NAD binding"/>
    <property type="evidence" value="ECO:0007669"/>
    <property type="project" value="UniProtKB-ARBA"/>
</dbReference>
<dbReference type="GO" id="GO:0003951">
    <property type="term" value="F:NAD+ kinase activity"/>
    <property type="evidence" value="ECO:0007669"/>
    <property type="project" value="UniProtKB-UniRule"/>
</dbReference>
<dbReference type="GO" id="GO:0019674">
    <property type="term" value="P:NAD metabolic process"/>
    <property type="evidence" value="ECO:0007669"/>
    <property type="project" value="InterPro"/>
</dbReference>
<dbReference type="GO" id="GO:0006741">
    <property type="term" value="P:NADP biosynthetic process"/>
    <property type="evidence" value="ECO:0007669"/>
    <property type="project" value="UniProtKB-UniRule"/>
</dbReference>
<dbReference type="Gene3D" id="3.40.50.10330">
    <property type="entry name" value="Probable inorganic polyphosphate/atp-NAD kinase, domain 1"/>
    <property type="match status" value="1"/>
</dbReference>
<dbReference type="Gene3D" id="2.60.200.30">
    <property type="entry name" value="Probable inorganic polyphosphate/atp-NAD kinase, domain 2"/>
    <property type="match status" value="1"/>
</dbReference>
<dbReference type="HAMAP" id="MF_00361">
    <property type="entry name" value="NAD_kinase"/>
    <property type="match status" value="1"/>
</dbReference>
<dbReference type="InterPro" id="IPR017438">
    <property type="entry name" value="ATP-NAD_kinase_N"/>
</dbReference>
<dbReference type="InterPro" id="IPR017437">
    <property type="entry name" value="ATP-NAD_kinase_PpnK-typ_C"/>
</dbReference>
<dbReference type="InterPro" id="IPR016064">
    <property type="entry name" value="NAD/diacylglycerol_kinase_sf"/>
</dbReference>
<dbReference type="InterPro" id="IPR002504">
    <property type="entry name" value="NADK"/>
</dbReference>
<dbReference type="NCBIfam" id="NF003406">
    <property type="entry name" value="PRK04761.1"/>
    <property type="match status" value="1"/>
</dbReference>
<dbReference type="PANTHER" id="PTHR20275">
    <property type="entry name" value="NAD KINASE"/>
    <property type="match status" value="1"/>
</dbReference>
<dbReference type="PANTHER" id="PTHR20275:SF0">
    <property type="entry name" value="NAD KINASE"/>
    <property type="match status" value="1"/>
</dbReference>
<dbReference type="Pfam" id="PF01513">
    <property type="entry name" value="NAD_kinase"/>
    <property type="match status" value="1"/>
</dbReference>
<dbReference type="Pfam" id="PF20143">
    <property type="entry name" value="NAD_kinase_C"/>
    <property type="match status" value="1"/>
</dbReference>
<dbReference type="SUPFAM" id="SSF111331">
    <property type="entry name" value="NAD kinase/diacylglycerol kinase-like"/>
    <property type="match status" value="1"/>
</dbReference>
<proteinExistence type="inferred from homology"/>
<name>NADK_CERS5</name>
<keyword id="KW-0067">ATP-binding</keyword>
<keyword id="KW-0963">Cytoplasm</keyword>
<keyword id="KW-0418">Kinase</keyword>
<keyword id="KW-0520">NAD</keyword>
<keyword id="KW-0521">NADP</keyword>
<keyword id="KW-0547">Nucleotide-binding</keyword>
<keyword id="KW-0808">Transferase</keyword>
<feature type="chain" id="PRO_1000005436" description="NAD kinase">
    <location>
        <begin position="1"/>
        <end position="254"/>
    </location>
</feature>
<feature type="active site" description="Proton acceptor" evidence="1">
    <location>
        <position position="44"/>
    </location>
</feature>
<feature type="binding site" evidence="1">
    <location>
        <begin position="44"/>
        <end position="45"/>
    </location>
    <ligand>
        <name>NAD(+)</name>
        <dbReference type="ChEBI" id="CHEBI:57540"/>
    </ligand>
</feature>
<feature type="binding site" evidence="1">
    <location>
        <begin position="114"/>
        <end position="115"/>
    </location>
    <ligand>
        <name>NAD(+)</name>
        <dbReference type="ChEBI" id="CHEBI:57540"/>
    </ligand>
</feature>
<feature type="binding site" evidence="1">
    <location>
        <position position="144"/>
    </location>
    <ligand>
        <name>NAD(+)</name>
        <dbReference type="ChEBI" id="CHEBI:57540"/>
    </ligand>
</feature>
<feature type="binding site" evidence="1">
    <location>
        <position position="152"/>
    </location>
    <ligand>
        <name>NAD(+)</name>
        <dbReference type="ChEBI" id="CHEBI:57540"/>
    </ligand>
</feature>
<feature type="binding site" evidence="1">
    <location>
        <begin position="155"/>
        <end position="160"/>
    </location>
    <ligand>
        <name>NAD(+)</name>
        <dbReference type="ChEBI" id="CHEBI:57540"/>
    </ligand>
</feature>
<feature type="binding site" evidence="1">
    <location>
        <position position="179"/>
    </location>
    <ligand>
        <name>NAD(+)</name>
        <dbReference type="ChEBI" id="CHEBI:57540"/>
    </ligand>
</feature>
<organism>
    <name type="scientific">Cereibacter sphaeroides (strain ATCC 17025 / ATH 2.4.3)</name>
    <name type="common">Rhodobacter sphaeroides</name>
    <dbReference type="NCBI Taxonomy" id="349102"/>
    <lineage>
        <taxon>Bacteria</taxon>
        <taxon>Pseudomonadati</taxon>
        <taxon>Pseudomonadota</taxon>
        <taxon>Alphaproteobacteria</taxon>
        <taxon>Rhodobacterales</taxon>
        <taxon>Paracoccaceae</taxon>
        <taxon>Cereibacter</taxon>
    </lineage>
</organism>